<reference key="1">
    <citation type="journal article" date="2003" name="Science">
        <title>In-depth view of structure, activity, and evolution of rice chromosome 10.</title>
        <authorList>
            <person name="Yu Y."/>
            <person name="Rambo T."/>
            <person name="Currie J."/>
            <person name="Saski C."/>
            <person name="Kim H.-R."/>
            <person name="Collura K."/>
            <person name="Thompson S."/>
            <person name="Simmons J."/>
            <person name="Yang T.-J."/>
            <person name="Nah G."/>
            <person name="Patel A.J."/>
            <person name="Thurmond S."/>
            <person name="Henry D."/>
            <person name="Oates R."/>
            <person name="Palmer M."/>
            <person name="Pries G."/>
            <person name="Gibson J."/>
            <person name="Anderson H."/>
            <person name="Paradkar M."/>
            <person name="Crane L."/>
            <person name="Dale J."/>
            <person name="Carver M.B."/>
            <person name="Wood T."/>
            <person name="Frisch D."/>
            <person name="Engler F."/>
            <person name="Soderlund C."/>
            <person name="Palmer L.E."/>
            <person name="Teytelman L."/>
            <person name="Nascimento L."/>
            <person name="De la Bastide M."/>
            <person name="Spiegel L."/>
            <person name="Ware D."/>
            <person name="O'Shaughnessy A."/>
            <person name="Dike S."/>
            <person name="Dedhia N."/>
            <person name="Preston R."/>
            <person name="Huang E."/>
            <person name="Ferraro K."/>
            <person name="Kuit K."/>
            <person name="Miller B."/>
            <person name="Zutavern T."/>
            <person name="Katzenberger F."/>
            <person name="Muller S."/>
            <person name="Balija V."/>
            <person name="Martienssen R.A."/>
            <person name="Stein L."/>
            <person name="Minx P."/>
            <person name="Johnson D."/>
            <person name="Cordum H."/>
            <person name="Mardis E."/>
            <person name="Cheng Z."/>
            <person name="Jiang J."/>
            <person name="Wilson R."/>
            <person name="McCombie W.R."/>
            <person name="Wing R.A."/>
            <person name="Yuan Q."/>
            <person name="Ouyang S."/>
            <person name="Liu J."/>
            <person name="Jones K.M."/>
            <person name="Gansberger K."/>
            <person name="Moffat K."/>
            <person name="Hill J."/>
            <person name="Tsitrin T."/>
            <person name="Overton L."/>
            <person name="Bera J."/>
            <person name="Kim M."/>
            <person name="Jin S."/>
            <person name="Tallon L."/>
            <person name="Ciecko A."/>
            <person name="Pai G."/>
            <person name="Van Aken S."/>
            <person name="Utterback T."/>
            <person name="Reidmuller S."/>
            <person name="Bormann J."/>
            <person name="Feldblyum T."/>
            <person name="Hsiao J."/>
            <person name="Zismann V."/>
            <person name="Blunt S."/>
            <person name="de Vazeille A.R."/>
            <person name="Shaffer T."/>
            <person name="Koo H."/>
            <person name="Suh B."/>
            <person name="Yang Q."/>
            <person name="Haas B."/>
            <person name="Peterson J."/>
            <person name="Pertea M."/>
            <person name="Volfovsky N."/>
            <person name="Wortman J."/>
            <person name="White O."/>
            <person name="Salzberg S.L."/>
            <person name="Fraser C.M."/>
            <person name="Buell C.R."/>
            <person name="Messing J."/>
            <person name="Song R."/>
            <person name="Fuks G."/>
            <person name="Llaca V."/>
            <person name="Kovchak S."/>
            <person name="Young S."/>
            <person name="Bowers J.E."/>
            <person name="Paterson A.H."/>
            <person name="Johns M.A."/>
            <person name="Mao L."/>
            <person name="Pan H."/>
            <person name="Dean R.A."/>
        </authorList>
    </citation>
    <scope>NUCLEOTIDE SEQUENCE [LARGE SCALE GENOMIC DNA]</scope>
    <source>
        <strain>cv. Nipponbare</strain>
    </source>
</reference>
<reference key="2">
    <citation type="journal article" date="2005" name="Nature">
        <title>The map-based sequence of the rice genome.</title>
        <authorList>
            <consortium name="International rice genome sequencing project (IRGSP)"/>
        </authorList>
    </citation>
    <scope>NUCLEOTIDE SEQUENCE [LARGE SCALE GENOMIC DNA]</scope>
    <source>
        <strain>cv. Nipponbare</strain>
    </source>
</reference>
<reference key="3">
    <citation type="journal article" date="2008" name="Nucleic Acids Res.">
        <title>The rice annotation project database (RAP-DB): 2008 update.</title>
        <authorList>
            <consortium name="The rice annotation project (RAP)"/>
        </authorList>
    </citation>
    <scope>GENOME REANNOTATION</scope>
    <source>
        <strain>cv. Nipponbare</strain>
    </source>
</reference>
<reference key="4">
    <citation type="journal article" date="2013" name="Rice">
        <title>Improvement of the Oryza sativa Nipponbare reference genome using next generation sequence and optical map data.</title>
        <authorList>
            <person name="Kawahara Y."/>
            <person name="de la Bastide M."/>
            <person name="Hamilton J.P."/>
            <person name="Kanamori H."/>
            <person name="McCombie W.R."/>
            <person name="Ouyang S."/>
            <person name="Schwartz D.C."/>
            <person name="Tanaka T."/>
            <person name="Wu J."/>
            <person name="Zhou S."/>
            <person name="Childs K.L."/>
            <person name="Davidson R.M."/>
            <person name="Lin H."/>
            <person name="Quesada-Ocampo L."/>
            <person name="Vaillancourt B."/>
            <person name="Sakai H."/>
            <person name="Lee S.S."/>
            <person name="Kim J."/>
            <person name="Numa H."/>
            <person name="Itoh T."/>
            <person name="Buell C.R."/>
            <person name="Matsumoto T."/>
        </authorList>
    </citation>
    <scope>GENOME REANNOTATION</scope>
    <source>
        <strain>cv. Nipponbare</strain>
    </source>
</reference>
<reference key="5">
    <citation type="journal article" date="2005" name="PLoS Biol.">
        <title>The genomes of Oryza sativa: a history of duplications.</title>
        <authorList>
            <person name="Yu J."/>
            <person name="Wang J."/>
            <person name="Lin W."/>
            <person name="Li S."/>
            <person name="Li H."/>
            <person name="Zhou J."/>
            <person name="Ni P."/>
            <person name="Dong W."/>
            <person name="Hu S."/>
            <person name="Zeng C."/>
            <person name="Zhang J."/>
            <person name="Zhang Y."/>
            <person name="Li R."/>
            <person name="Xu Z."/>
            <person name="Li S."/>
            <person name="Li X."/>
            <person name="Zheng H."/>
            <person name="Cong L."/>
            <person name="Lin L."/>
            <person name="Yin J."/>
            <person name="Geng J."/>
            <person name="Li G."/>
            <person name="Shi J."/>
            <person name="Liu J."/>
            <person name="Lv H."/>
            <person name="Li J."/>
            <person name="Wang J."/>
            <person name="Deng Y."/>
            <person name="Ran L."/>
            <person name="Shi X."/>
            <person name="Wang X."/>
            <person name="Wu Q."/>
            <person name="Li C."/>
            <person name="Ren X."/>
            <person name="Wang J."/>
            <person name="Wang X."/>
            <person name="Li D."/>
            <person name="Liu D."/>
            <person name="Zhang X."/>
            <person name="Ji Z."/>
            <person name="Zhao W."/>
            <person name="Sun Y."/>
            <person name="Zhang Z."/>
            <person name="Bao J."/>
            <person name="Han Y."/>
            <person name="Dong L."/>
            <person name="Ji J."/>
            <person name="Chen P."/>
            <person name="Wu S."/>
            <person name="Liu J."/>
            <person name="Xiao Y."/>
            <person name="Bu D."/>
            <person name="Tan J."/>
            <person name="Yang L."/>
            <person name="Ye C."/>
            <person name="Zhang J."/>
            <person name="Xu J."/>
            <person name="Zhou Y."/>
            <person name="Yu Y."/>
            <person name="Zhang B."/>
            <person name="Zhuang S."/>
            <person name="Wei H."/>
            <person name="Liu B."/>
            <person name="Lei M."/>
            <person name="Yu H."/>
            <person name="Li Y."/>
            <person name="Xu H."/>
            <person name="Wei S."/>
            <person name="He X."/>
            <person name="Fang L."/>
            <person name="Zhang Z."/>
            <person name="Zhang Y."/>
            <person name="Huang X."/>
            <person name="Su Z."/>
            <person name="Tong W."/>
            <person name="Li J."/>
            <person name="Tong Z."/>
            <person name="Li S."/>
            <person name="Ye J."/>
            <person name="Wang L."/>
            <person name="Fang L."/>
            <person name="Lei T."/>
            <person name="Chen C.-S."/>
            <person name="Chen H.-C."/>
            <person name="Xu Z."/>
            <person name="Li H."/>
            <person name="Huang H."/>
            <person name="Zhang F."/>
            <person name="Xu H."/>
            <person name="Li N."/>
            <person name="Zhao C."/>
            <person name="Li S."/>
            <person name="Dong L."/>
            <person name="Huang Y."/>
            <person name="Li L."/>
            <person name="Xi Y."/>
            <person name="Qi Q."/>
            <person name="Li W."/>
            <person name="Zhang B."/>
            <person name="Hu W."/>
            <person name="Zhang Y."/>
            <person name="Tian X."/>
            <person name="Jiao Y."/>
            <person name="Liang X."/>
            <person name="Jin J."/>
            <person name="Gao L."/>
            <person name="Zheng W."/>
            <person name="Hao B."/>
            <person name="Liu S.-M."/>
            <person name="Wang W."/>
            <person name="Yuan L."/>
            <person name="Cao M."/>
            <person name="McDermott J."/>
            <person name="Samudrala R."/>
            <person name="Wang J."/>
            <person name="Wong G.K.-S."/>
            <person name="Yang H."/>
        </authorList>
    </citation>
    <scope>NUCLEOTIDE SEQUENCE [LARGE SCALE GENOMIC DNA]</scope>
    <source>
        <strain>cv. Nipponbare</strain>
    </source>
</reference>
<reference key="6">
    <citation type="journal article" date="2003" name="Science">
        <title>Collection, mapping, and annotation of over 28,000 cDNA clones from japonica rice.</title>
        <authorList>
            <consortium name="The rice full-length cDNA consortium"/>
        </authorList>
    </citation>
    <scope>NUCLEOTIDE SEQUENCE [LARGE SCALE MRNA]</scope>
    <source>
        <strain>cv. Nipponbare</strain>
    </source>
</reference>
<reference key="7">
    <citation type="journal article" date="1997" name="Plant J.">
        <title>Transcriptional repression by Oshox1, a novel homeodomain leucine zipper protein from rice.</title>
        <authorList>
            <person name="Meijer A.H."/>
            <person name="Scarpella E."/>
            <person name="van Dijk E.L."/>
            <person name="Qin L."/>
            <person name="Taal A.J.C."/>
            <person name="Rueb S."/>
            <person name="Harrington S.E."/>
            <person name="McCouch S.R."/>
            <person name="Schilperoort R.A."/>
            <person name="Hoge J.H.C."/>
        </authorList>
    </citation>
    <scope>FUNCTION</scope>
    <scope>SUBUNIT</scope>
    <scope>TISSUE SPECIFICITY</scope>
</reference>
<reference key="8">
    <citation type="journal article" date="2000" name="Mol. Gen. Genet.">
        <title>HD-Zip proteins of families I and II from rice: interactions and functional properties.</title>
        <authorList>
            <person name="Meijer A.H."/>
            <person name="de Kam R.J."/>
            <person name="d'Erfurth I."/>
            <person name="Shen W.-B."/>
            <person name="Hoge J.H.C."/>
        </authorList>
    </citation>
    <scope>FUNCTION</scope>
    <scope>SUBUNIT</scope>
    <scope>TISSUE SPECIFICITY</scope>
    <scope>INDUCTION</scope>
</reference>
<reference key="9">
    <citation type="journal article" date="2008" name="Plant Mol. Biol.">
        <title>A genome-wide survey of HD-Zip genes in rice and analysis of drought-responsive family members.</title>
        <authorList>
            <person name="Agalou A."/>
            <person name="Purwantomo S."/>
            <person name="Oevernaes E."/>
            <person name="Johannesson H."/>
            <person name="Zhu X."/>
            <person name="Estiati A."/>
            <person name="de Kam R.J."/>
            <person name="Engstroem P."/>
            <person name="Slamet-Loedin I.H."/>
            <person name="Zhu Z."/>
            <person name="Wang M."/>
            <person name="Xiong L."/>
            <person name="Meijer A.H."/>
            <person name="Ouwerkerk P.B.F."/>
        </authorList>
    </citation>
    <scope>TISSUE SPECIFICITY</scope>
    <scope>GENE FAMILY</scope>
    <scope>NOMENCLATURE</scope>
</reference>
<gene>
    <name type="primary">HOX1</name>
    <name type="ordered locus">Os10g0561800</name>
    <name type="ordered locus">LOC_Os10g41230</name>
    <name type="ORF">OsJ_031189</name>
    <name type="ORF">OSJNBb0089A17.12</name>
</gene>
<accession>Q7XC54</accession>
<accession>B7EAV9</accession>
<accession>Q9AUT0</accession>
<sequence>MEMMVHGRRDEQYGGLRLGLGLGLSLGVAGGAADDEQPPPRRGAAPPPQQQLCGWNGGGLFSSSSSDHRGRSAMMACHDVIEMPFLRGIDVNRAPAAETTTTTARGPSCSEEDEEPGASSPNSTLSSLSGKRGAPSAATAAAAAASDDEDSGGGSRKKLRLSKDQAAVLEDTFKEHNTLNPKQKAALARQLNLKPRQVEVWFQNRRARTKLKQTEVDCELLKRCCETLTDENRRLHRELQELRALKLATAAAAPHHLYGARVPPPTTLTMCPSCERVASAATTTRNNSGAAPARPVPTRPWPPAAAQRSSA</sequence>
<comment type="function">
    <text evidence="3 5">Probable transcription repressor involved leaf development. Binds to the DNA sequence 5'-CAAT[GC]ATTG-3'. May act as a regulatory switch to specify provascular cell fate.</text>
</comment>
<comment type="subunit">
    <text evidence="3 5 6">Homodimer (Probable). May form a heterodimer with HOX2, HOX3 or HOX7.</text>
</comment>
<comment type="subcellular location">
    <subcellularLocation>
        <location evidence="6">Nucleus</location>
    </subcellularLocation>
</comment>
<comment type="tissue specificity">
    <text evidence="3 4 5">Expressed in root provascular and vascular cylinder, provascular and vascular strands of leaves, provascular and vascular strands of the whole panicle, in mature embryo provascular bundles of scutellum and embryonic axis and provascular and vascular strands of young immature spikelet organs. Expressed in differentiating and differentiated xylem and phloem elements, and in outer and inner bundle sheath cells of all vascular bundles. Expressed in auricles, ligules, culm, guard cells brac hairs and pollen.</text>
</comment>
<comment type="induction">
    <text evidence="3">By auxin and sucrose in primary root apical region. By wounding in leaves.</text>
</comment>
<comment type="similarity">
    <text evidence="6">Belongs to the HD-ZIP homeobox family. Class II subfamily.</text>
</comment>
<proteinExistence type="evidence at protein level"/>
<protein>
    <recommendedName>
        <fullName>Homeobox-leucine zipper protein HOX1</fullName>
    </recommendedName>
    <alternativeName>
        <fullName>HD-ZIP protein HOX1</fullName>
    </alternativeName>
    <alternativeName>
        <fullName>Homeodomain transcription factor HOX1</fullName>
    </alternativeName>
    <alternativeName>
        <fullName>OsHox1</fullName>
    </alternativeName>
</protein>
<feature type="chain" id="PRO_0000331675" description="Homeobox-leucine zipper protein HOX1">
    <location>
        <begin position="1"/>
        <end position="311"/>
    </location>
</feature>
<feature type="DNA-binding region" description="Homeobox" evidence="1">
    <location>
        <begin position="154"/>
        <end position="213"/>
    </location>
</feature>
<feature type="region of interest" description="Disordered" evidence="2">
    <location>
        <begin position="29"/>
        <end position="69"/>
    </location>
</feature>
<feature type="region of interest" description="Disordered" evidence="2">
    <location>
        <begin position="97"/>
        <end position="160"/>
    </location>
</feature>
<feature type="region of interest" description="Leucine-zipper">
    <location>
        <begin position="212"/>
        <end position="256"/>
    </location>
</feature>
<feature type="region of interest" description="Disordered" evidence="2">
    <location>
        <begin position="279"/>
        <end position="311"/>
    </location>
</feature>
<feature type="compositionally biased region" description="Low complexity" evidence="2">
    <location>
        <begin position="119"/>
        <end position="145"/>
    </location>
</feature>
<feature type="compositionally biased region" description="Polar residues" evidence="2">
    <location>
        <begin position="280"/>
        <end position="289"/>
    </location>
</feature>
<feature type="compositionally biased region" description="Pro residues" evidence="2">
    <location>
        <begin position="294"/>
        <end position="303"/>
    </location>
</feature>
<keyword id="KW-0238">DNA-binding</keyword>
<keyword id="KW-0371">Homeobox</keyword>
<keyword id="KW-0539">Nucleus</keyword>
<keyword id="KW-1185">Reference proteome</keyword>
<keyword id="KW-0678">Repressor</keyword>
<keyword id="KW-0804">Transcription</keyword>
<keyword id="KW-0805">Transcription regulation</keyword>
<name>HOX1_ORYSJ</name>
<evidence type="ECO:0000255" key="1">
    <source>
        <dbReference type="PROSITE-ProRule" id="PRU00108"/>
    </source>
</evidence>
<evidence type="ECO:0000256" key="2">
    <source>
        <dbReference type="SAM" id="MobiDB-lite"/>
    </source>
</evidence>
<evidence type="ECO:0000269" key="3">
    <source>
    </source>
</evidence>
<evidence type="ECO:0000269" key="4">
    <source>
    </source>
</evidence>
<evidence type="ECO:0000269" key="5">
    <source>
    </source>
</evidence>
<evidence type="ECO:0000305" key="6"/>
<dbReference type="EMBL" id="AC079890">
    <property type="protein sequence ID" value="AAK31270.1"/>
    <property type="molecule type" value="Genomic_DNA"/>
</dbReference>
<dbReference type="EMBL" id="DP000086">
    <property type="protein sequence ID" value="AAP55020.1"/>
    <property type="molecule type" value="Genomic_DNA"/>
</dbReference>
<dbReference type="EMBL" id="AP008216">
    <property type="protein sequence ID" value="BAF27226.1"/>
    <property type="molecule type" value="Genomic_DNA"/>
</dbReference>
<dbReference type="EMBL" id="AP014966">
    <property type="protein sequence ID" value="BAT12064.1"/>
    <property type="molecule type" value="Genomic_DNA"/>
</dbReference>
<dbReference type="EMBL" id="CM000147">
    <property type="protein sequence ID" value="EAZ16980.1"/>
    <property type="molecule type" value="Genomic_DNA"/>
</dbReference>
<dbReference type="EMBL" id="AK065404">
    <property type="protein sequence ID" value="BAG89506.1"/>
    <property type="molecule type" value="mRNA"/>
</dbReference>
<dbReference type="RefSeq" id="XP_015613269.1">
    <property type="nucleotide sequence ID" value="XM_015757783.1"/>
</dbReference>
<dbReference type="SMR" id="Q7XC54"/>
<dbReference type="PaxDb" id="39947-Q7XC54"/>
<dbReference type="EnsemblPlants" id="Os10t0561800-01">
    <property type="protein sequence ID" value="Os10t0561800-01"/>
    <property type="gene ID" value="Os10g0561800"/>
</dbReference>
<dbReference type="Gramene" id="Os10t0561800-01">
    <property type="protein sequence ID" value="Os10t0561800-01"/>
    <property type="gene ID" value="Os10g0561800"/>
</dbReference>
<dbReference type="KEGG" id="dosa:Os10g0561800"/>
<dbReference type="eggNOG" id="KOG0483">
    <property type="taxonomic scope" value="Eukaryota"/>
</dbReference>
<dbReference type="HOGENOM" id="CLU_049516_2_0_1"/>
<dbReference type="InParanoid" id="Q7XC54"/>
<dbReference type="OMA" id="AAPHHLY"/>
<dbReference type="OrthoDB" id="6159439at2759"/>
<dbReference type="Proteomes" id="UP000000763">
    <property type="component" value="Chromosome 10"/>
</dbReference>
<dbReference type="Proteomes" id="UP000007752">
    <property type="component" value="Chromosome 10"/>
</dbReference>
<dbReference type="Proteomes" id="UP000059680">
    <property type="component" value="Chromosome 10"/>
</dbReference>
<dbReference type="GO" id="GO:0005634">
    <property type="term" value="C:nucleus"/>
    <property type="evidence" value="ECO:0007669"/>
    <property type="project" value="UniProtKB-SubCell"/>
</dbReference>
<dbReference type="GO" id="GO:0000981">
    <property type="term" value="F:DNA-binding transcription factor activity, RNA polymerase II-specific"/>
    <property type="evidence" value="ECO:0007669"/>
    <property type="project" value="InterPro"/>
</dbReference>
<dbReference type="GO" id="GO:0043565">
    <property type="term" value="F:sequence-specific DNA binding"/>
    <property type="evidence" value="ECO:0007669"/>
    <property type="project" value="InterPro"/>
</dbReference>
<dbReference type="CDD" id="cd00086">
    <property type="entry name" value="homeodomain"/>
    <property type="match status" value="1"/>
</dbReference>
<dbReference type="FunFam" id="1.10.10.60:FF:000577">
    <property type="entry name" value="Homeobox-leucine zipper protein 18"/>
    <property type="match status" value="1"/>
</dbReference>
<dbReference type="Gene3D" id="1.10.10.60">
    <property type="entry name" value="Homeodomain-like"/>
    <property type="match status" value="1"/>
</dbReference>
<dbReference type="InterPro" id="IPR001356">
    <property type="entry name" value="HD"/>
</dbReference>
<dbReference type="InterPro" id="IPR050762">
    <property type="entry name" value="HD-ZIP_Homeobox_LZ_Class_II"/>
</dbReference>
<dbReference type="InterPro" id="IPR006712">
    <property type="entry name" value="HD-ZIP_N"/>
</dbReference>
<dbReference type="InterPro" id="IPR017970">
    <property type="entry name" value="Homeobox_CS"/>
</dbReference>
<dbReference type="InterPro" id="IPR009057">
    <property type="entry name" value="Homeodomain-like_sf"/>
</dbReference>
<dbReference type="InterPro" id="IPR003106">
    <property type="entry name" value="Leu_zip_homeo"/>
</dbReference>
<dbReference type="PANTHER" id="PTHR45714">
    <property type="entry name" value="HOMEOBOX-LEUCINE ZIPPER PROTEIN HAT14"/>
    <property type="match status" value="1"/>
</dbReference>
<dbReference type="PANTHER" id="PTHR45714:SF88">
    <property type="entry name" value="HOMEOBOX-LEUCINE ZIPPER PROTEIN HAT4"/>
    <property type="match status" value="1"/>
</dbReference>
<dbReference type="Pfam" id="PF02183">
    <property type="entry name" value="HALZ"/>
    <property type="match status" value="1"/>
</dbReference>
<dbReference type="Pfam" id="PF04618">
    <property type="entry name" value="HD-ZIP_N"/>
    <property type="match status" value="1"/>
</dbReference>
<dbReference type="Pfam" id="PF00046">
    <property type="entry name" value="Homeodomain"/>
    <property type="match status" value="1"/>
</dbReference>
<dbReference type="SMART" id="SM00340">
    <property type="entry name" value="HALZ"/>
    <property type="match status" value="1"/>
</dbReference>
<dbReference type="SMART" id="SM00389">
    <property type="entry name" value="HOX"/>
    <property type="match status" value="1"/>
</dbReference>
<dbReference type="SUPFAM" id="SSF46689">
    <property type="entry name" value="Homeodomain-like"/>
    <property type="match status" value="1"/>
</dbReference>
<dbReference type="PROSITE" id="PS00027">
    <property type="entry name" value="HOMEOBOX_1"/>
    <property type="match status" value="1"/>
</dbReference>
<dbReference type="PROSITE" id="PS50071">
    <property type="entry name" value="HOMEOBOX_2"/>
    <property type="match status" value="1"/>
</dbReference>
<organism>
    <name type="scientific">Oryza sativa subsp. japonica</name>
    <name type="common">Rice</name>
    <dbReference type="NCBI Taxonomy" id="39947"/>
    <lineage>
        <taxon>Eukaryota</taxon>
        <taxon>Viridiplantae</taxon>
        <taxon>Streptophyta</taxon>
        <taxon>Embryophyta</taxon>
        <taxon>Tracheophyta</taxon>
        <taxon>Spermatophyta</taxon>
        <taxon>Magnoliopsida</taxon>
        <taxon>Liliopsida</taxon>
        <taxon>Poales</taxon>
        <taxon>Poaceae</taxon>
        <taxon>BOP clade</taxon>
        <taxon>Oryzoideae</taxon>
        <taxon>Oryzeae</taxon>
        <taxon>Oryzinae</taxon>
        <taxon>Oryza</taxon>
        <taxon>Oryza sativa</taxon>
    </lineage>
</organism>